<reference key="1">
    <citation type="journal article" date="1989" name="J. Cell Biol.">
        <title>Cloning of cDNAs encoding two related 100-kD coated vesicle proteins (alpha-adaptins).</title>
        <authorList>
            <person name="Robinson M.S."/>
        </authorList>
    </citation>
    <scope>NUCLEOTIDE SEQUENCE [MRNA]</scope>
    <source>
        <tissue>Brain</tissue>
    </source>
</reference>
<reference key="2">
    <citation type="journal article" date="2004" name="Genome Res.">
        <title>The status, quality, and expansion of the NIH full-length cDNA project: the Mammalian Gene Collection (MGC).</title>
        <authorList>
            <consortium name="The MGC Project Team"/>
        </authorList>
    </citation>
    <scope>NUCLEOTIDE SEQUENCE [LARGE SCALE MRNA] (ISOFORM A)</scope>
    <source>
        <tissue>Retina</tissue>
    </source>
</reference>
<reference key="3">
    <citation type="journal article" date="1995" name="J. Biol. Chem.">
        <title>The alpha chain of the AP-2 adaptor is a clathrin binding subunit.</title>
        <authorList>
            <person name="Goodman O.B. Jr."/>
            <person name="Keen J.H."/>
        </authorList>
    </citation>
    <scope>INTERACTION WITH CLATHRIN</scope>
</reference>
<reference key="4">
    <citation type="journal article" date="1995" name="J. Cell Sci.">
        <title>Expression and localization of alpha-adaptin isoforms.</title>
        <authorList>
            <person name="Ball C.L."/>
            <person name="Hunt S.P."/>
            <person name="Robinson M.S."/>
        </authorList>
    </citation>
    <scope>CHARACTERIZATION OF ISOFORMS A AND B</scope>
</reference>
<reference key="5">
    <citation type="journal article" date="2003" name="Cell Struct. Funct.">
        <title>Adaptor protein complexes as the key regulators of protein sorting in the post-Golgi network.</title>
        <authorList>
            <person name="Nakatsu F."/>
            <person name="Ohno H."/>
        </authorList>
    </citation>
    <scope>FUNCTION OF THE AP-2 COMPLEX IN CLATHRIN-MEDIATED ENDOCYTOSIS</scope>
</reference>
<reference key="6">
    <citation type="journal article" date="2004" name="Annu. Rev. Cell Dev. Biol.">
        <title>Adaptors for clathrin coats: structure and function.</title>
        <authorList>
            <person name="Owen D.J."/>
            <person name="Collins B.M."/>
            <person name="Evans P.R."/>
        </authorList>
    </citation>
    <scope>FUNCTION OF THE AP-2 COMPLEX IN CLATHRIN-MEDIATED ENDOCYTOSIS</scope>
</reference>
<reference key="7">
    <citation type="journal article" date="2007" name="J. Biol. Chem.">
        <title>SGIP1alpha is an endocytic protein that directly interacts with phospholipids and Eps15.</title>
        <authorList>
            <person name="Uezu A."/>
            <person name="Horiuchi A."/>
            <person name="Kanda K."/>
            <person name="Kikuchi N."/>
            <person name="Umeda K."/>
            <person name="Tsujita K."/>
            <person name="Suetsugu S."/>
            <person name="Araki N."/>
            <person name="Yamamoto H."/>
            <person name="Takenawa T."/>
            <person name="Nakanishi H."/>
        </authorList>
    </citation>
    <scope>INTERACTION WITH SGIP1</scope>
</reference>
<reference key="8">
    <citation type="journal article" date="2007" name="Proc. Natl. Acad. Sci. U.S.A.">
        <title>Large-scale phosphorylation analysis of mouse liver.</title>
        <authorList>
            <person name="Villen J."/>
            <person name="Beausoleil S.A."/>
            <person name="Gerber S.A."/>
            <person name="Gygi S.P."/>
        </authorList>
    </citation>
    <scope>IDENTIFICATION BY MASS SPECTROMETRY [LARGE SCALE ANALYSIS]</scope>
    <source>
        <tissue>Liver</tissue>
    </source>
</reference>
<reference key="9">
    <citation type="journal article" date="2008" name="Cell. Signal.">
        <title>Identification of a novel di-leucine motif mediating K(+)/Cl(-) cotransporter KCC2 constitutive endocytosis.</title>
        <authorList>
            <person name="Zhao B."/>
            <person name="Wong A.Y.C."/>
            <person name="Murshid A."/>
            <person name="Bowie D."/>
            <person name="Presley J.F."/>
            <person name="Bedford F.K."/>
        </authorList>
    </citation>
    <scope>INTERACTION WITH SLC12A5</scope>
</reference>
<reference key="10">
    <citation type="journal article" date="2010" name="Cell">
        <title>A tissue-specific atlas of mouse protein phosphorylation and expression.</title>
        <authorList>
            <person name="Huttlin E.L."/>
            <person name="Jedrychowski M.P."/>
            <person name="Elias J.E."/>
            <person name="Goswami T."/>
            <person name="Rad R."/>
            <person name="Beausoleil S.A."/>
            <person name="Villen J."/>
            <person name="Haas W."/>
            <person name="Sowa M.E."/>
            <person name="Gygi S.P."/>
        </authorList>
    </citation>
    <scope>PHOSPHORYLATION [LARGE SCALE ANALYSIS] AT SER-652; THR-653 AND SER-655</scope>
    <scope>IDENTIFICATION BY MASS SPECTROMETRY [LARGE SCALE ANALYSIS]</scope>
    <source>
        <tissue>Brain</tissue>
        <tissue>Brown adipose tissue</tissue>
        <tissue>Heart</tissue>
        <tissue>Kidney</tissue>
        <tissue>Liver</tissue>
        <tissue>Lung</tissue>
        <tissue>Pancreas</tissue>
        <tissue>Spleen</tissue>
        <tissue>Testis</tissue>
    </source>
</reference>
<reference key="11">
    <citation type="journal article" date="2013" name="J. Clin. Invest.">
        <title>Endocytosis of synaptic ADAM10 in neuronal plasticity and Alzheimer's disease.</title>
        <authorList>
            <person name="Marcello E."/>
            <person name="Saraceno C."/>
            <person name="Musardo S."/>
            <person name="Vara H."/>
            <person name="de la Fuente A.G."/>
            <person name="Pelucchi S."/>
            <person name="Di Marino D."/>
            <person name="Borroni B."/>
            <person name="Tramontano A."/>
            <person name="Perez-Otano I."/>
            <person name="Padovani A."/>
            <person name="Giustetto M."/>
            <person name="Gardoni F."/>
            <person name="Di Luca M."/>
        </authorList>
    </citation>
    <scope>FUNCTION</scope>
    <scope>INTERACTION WITH ADAM10</scope>
    <scope>TISSUE SPECIFICITY</scope>
</reference>
<reference key="12">
    <citation type="journal article" date="2017" name="Cell Rep.">
        <title>APache is an AP2-interacting protein involved in synaptic vesicle trafficking and neuronal development.</title>
        <authorList>
            <person name="Piccini A."/>
            <person name="Castroflorio E."/>
            <person name="Valente P."/>
            <person name="Guarnieri F.C."/>
            <person name="Aprile D."/>
            <person name="Michetti C."/>
            <person name="Bramini M."/>
            <person name="Giansante G."/>
            <person name="Pinto B."/>
            <person name="Savardi A."/>
            <person name="Cesca F."/>
            <person name="Bachi A."/>
            <person name="Cattaneo A."/>
            <person name="Wren J.D."/>
            <person name="Fassio A."/>
            <person name="Valtorta F."/>
            <person name="Benfenati F."/>
            <person name="Giovedi S."/>
        </authorList>
    </citation>
    <scope>INTERACTION WITH KIAA1107</scope>
</reference>
<feature type="chain" id="PRO_0000193731" description="AP-2 complex subunit alpha-1">
    <location>
        <begin position="1"/>
        <end position="977"/>
    </location>
</feature>
<feature type="region of interest" description="Disordered" evidence="4">
    <location>
        <begin position="614"/>
        <end position="702"/>
    </location>
</feature>
<feature type="compositionally biased region" description="Low complexity" evidence="4">
    <location>
        <begin position="646"/>
        <end position="657"/>
    </location>
</feature>
<feature type="compositionally biased region" description="Pro residues" evidence="4">
    <location>
        <begin position="666"/>
        <end position="675"/>
    </location>
</feature>
<feature type="modified residue" description="Phosphoserine" evidence="2">
    <location>
        <position position="626"/>
    </location>
</feature>
<feature type="modified residue" description="Phosphoserine" evidence="13">
    <location>
        <position position="652"/>
    </location>
</feature>
<feature type="modified residue" description="Phosphothreonine" evidence="13">
    <location>
        <position position="653"/>
    </location>
</feature>
<feature type="modified residue" description="Phosphoserine" evidence="13">
    <location>
        <position position="655"/>
    </location>
</feature>
<feature type="splice variant" id="VSP_000162" description="In isoform B." evidence="12">
    <location>
        <begin position="706"/>
        <end position="727"/>
    </location>
</feature>
<gene>
    <name type="primary">Ap2a1</name>
    <name type="synonym">Adtaa</name>
    <name type="synonym">Clapa1</name>
</gene>
<comment type="function">
    <text evidence="1 5 6 9">Component of the adaptor protein complex 2 (AP-2). Adaptor protein complexes function in protein transport via transport vesicles in different membrane traffic pathways. Adaptor protein complexes are vesicle coat components and appear to be involved in cargo selection and vesicle formation. AP-2 is involved in clathrin-dependent endocytosis in which cargo proteins are incorporated into vesicles surrounded by clathrin (clathrin-coated vesicles, CCVs) which are destined for fusion with the early endosome. The clathrin lattice serves as a mechanical scaffold but is itself unable to bind directly to membrane components. Clathrin-associated adaptor protein (AP) complexes which can bind directly to both the clathrin lattice and to the lipid and protein components of membranes are considered to be the major clathrin adaptors contributing the CCV formation. AP-2 also serves as a cargo receptor to selectively sort the membrane proteins involved in receptor-mediated endocytosis. AP-2 seems to play a role in the recycling of synaptic vesicle membranes from the presynaptic surface. AP-2 recognizes Y-X-X-[FILMV] (Y-X-X-Phi) and [ED]-X-X-X-L-[LI] endocytosis signal motifs within the cytosolic tails of transmembrane cargo molecules. AP-2 may also play a role in maintaining normal post-endocytic trafficking through the ARF6-regulated, non-clathrin pathway. The AP-2 alpha subunit binds polyphosphoinositide-containing lipids, positioning AP-2 on the membrane. During long-term potentiation in hippocampal neurons, AP-2 is responsible for the endocytosis of ADAM10 (PubMed:23676497). The AP-2 alpha subunit acts via its C-terminal appendage domain as a scaffolding platform for endocytic accessory proteins. The AP-2 alpha and AP-2 sigma subunits are thought to contribute to the recognition of the [ED]-X-X-X-L-[LI] motif (By similarity).</text>
</comment>
<comment type="subunit">
    <text evidence="2 3 7 8 9 10 11">Adaptor protein complex 2 (AP-2) is a heterotetramer composed of two large adaptins (alpha-type subunit AP2A1 or AP2A2 and beta-type subunit AP2B1), a medium adaptin (mu-type subunit AP2M1) and a small adaptin (sigma-type subunit AP2S1). Interacts with HIP1 and RAB11FIP2 (By similarity). Interacts with SLC12A5 (PubMed:18625303). Interacts with clathrin (PubMed:7559550). Interacts with SGIP1 (PubMed:17626015). Interacts with RFTN1 (By similarity). Interacts with KIAA1107 (PubMed:29262337). Interacts with PICALM (By similarity). Together with AP2B1 and AP2M1, it interacts with ADAM10; this interaction facilitates ADAM10 endocytosis from the plasma membrane during long-term potentiation in hippocampal neurons (PubMed:23676497). Interacts with ABCB11; this interaction regulates cell membrane expression of ABCB11 through its internalization in a clathrin-dependent manner and its subsequent degradation (By similarity). Probably interacts with ACE2 (via endocytic sorting signal motif); the interaction is inhibited by ACE2 phosphorylation (By similarity).</text>
</comment>
<comment type="interaction">
    <interactant intactId="EBI-775189">
        <id>P17426</id>
    </interactant>
    <interactant intactId="EBI-400125">
        <id>Q01097</id>
        <label>Grin2b</label>
    </interactant>
    <organismsDiffer>false</organismsDiffer>
    <experiments>2</experiments>
</comment>
<comment type="subcellular location">
    <subcellularLocation>
        <location evidence="2">Cell membrane</location>
    </subcellularLocation>
    <subcellularLocation>
        <location evidence="1">Membrane</location>
        <location evidence="1">Coated pit</location>
        <topology evidence="1">Peripheral membrane protein</topology>
        <orientation evidence="1">Cytoplasmic side</orientation>
    </subcellularLocation>
    <text evidence="1">AP-2 appears to be excluded from internalizing CCVs and to disengage from sites of endocytosis seconds before internalization of the nascent CCV.</text>
</comment>
<comment type="alternative products">
    <event type="alternative splicing"/>
    <isoform>
        <id>P17426-1</id>
        <name>A</name>
        <sequence type="displayed"/>
    </isoform>
    <isoform>
        <id>P17426-2</id>
        <name>B</name>
        <sequence type="described" ref="VSP_000162"/>
    </isoform>
</comment>
<comment type="tissue specificity">
    <text evidence="9">Expressed in the brain (at protein level) (PubMed:23676497). Isoform A: Expressed only in neuronal tissue and skeletal muscle. Isoform B: Widely expressed.</text>
</comment>
<comment type="similarity">
    <text evidence="12">Belongs to the adaptor complexes large subunit family.</text>
</comment>
<accession>P17426</accession>
<name>AP2A1_MOUSE</name>
<dbReference type="EMBL" id="X14971">
    <property type="protein sequence ID" value="CAA33096.1"/>
    <property type="molecule type" value="mRNA"/>
</dbReference>
<dbReference type="EMBL" id="BC031433">
    <property type="protein sequence ID" value="AAH31433.1"/>
    <property type="molecule type" value="mRNA"/>
</dbReference>
<dbReference type="CCDS" id="CCDS52238.1">
    <molecule id="P17426-2"/>
</dbReference>
<dbReference type="CCDS" id="CCDS52239.1">
    <molecule id="P17426-1"/>
</dbReference>
<dbReference type="PIR" id="A30111">
    <property type="entry name" value="A30111"/>
</dbReference>
<dbReference type="RefSeq" id="NP_001070732.1">
    <molecule id="P17426-2"/>
    <property type="nucleotide sequence ID" value="NM_001077264.1"/>
</dbReference>
<dbReference type="RefSeq" id="NP_031484.1">
    <molecule id="P17426-1"/>
    <property type="nucleotide sequence ID" value="NM_007458.2"/>
</dbReference>
<dbReference type="SMR" id="P17426"/>
<dbReference type="BioGRID" id="198129">
    <property type="interactions" value="42"/>
</dbReference>
<dbReference type="ComplexPortal" id="CPX-5152">
    <property type="entry name" value="AP-2 Adaptor complex, alpha1 variant"/>
</dbReference>
<dbReference type="CORUM" id="P17426"/>
<dbReference type="FunCoup" id="P17426">
    <property type="interactions" value="2914"/>
</dbReference>
<dbReference type="IntAct" id="P17426">
    <property type="interactions" value="21"/>
</dbReference>
<dbReference type="MINT" id="P17426"/>
<dbReference type="STRING" id="10090.ENSMUSP00000127842"/>
<dbReference type="GlyGen" id="P17426">
    <property type="glycosylation" value="4 sites, 1 N-linked glycan (1 site), 1 O-linked glycan (1 site)"/>
</dbReference>
<dbReference type="iPTMnet" id="P17426"/>
<dbReference type="PhosphoSitePlus" id="P17426"/>
<dbReference type="SwissPalm" id="P17426"/>
<dbReference type="jPOST" id="P17426"/>
<dbReference type="PaxDb" id="10090-ENSMUSP00000127842"/>
<dbReference type="PeptideAtlas" id="P17426"/>
<dbReference type="ProteomicsDB" id="281783">
    <molecule id="P17426-1"/>
</dbReference>
<dbReference type="ProteomicsDB" id="281784">
    <molecule id="P17426-2"/>
</dbReference>
<dbReference type="Pumba" id="P17426"/>
<dbReference type="Antibodypedia" id="3805">
    <property type="antibodies" value="308 antibodies from 33 providers"/>
</dbReference>
<dbReference type="DNASU" id="11771"/>
<dbReference type="Ensembl" id="ENSMUST00000107857.11">
    <molecule id="P17426-2"/>
    <property type="protein sequence ID" value="ENSMUSP00000103489.4"/>
    <property type="gene ID" value="ENSMUSG00000060279.16"/>
</dbReference>
<dbReference type="Ensembl" id="ENSMUST00000166972.9">
    <molecule id="P17426-1"/>
    <property type="protein sequence ID" value="ENSMUSP00000127842.2"/>
    <property type="gene ID" value="ENSMUSG00000060279.16"/>
</dbReference>
<dbReference type="GeneID" id="11771"/>
<dbReference type="KEGG" id="mmu:11771"/>
<dbReference type="UCSC" id="uc009grv.1">
    <molecule id="P17426-1"/>
    <property type="organism name" value="mouse"/>
</dbReference>
<dbReference type="UCSC" id="uc009grw.1">
    <molecule id="P17426-2"/>
    <property type="organism name" value="mouse"/>
</dbReference>
<dbReference type="AGR" id="MGI:101921"/>
<dbReference type="CTD" id="160"/>
<dbReference type="MGI" id="MGI:101921">
    <property type="gene designation" value="Ap2a1"/>
</dbReference>
<dbReference type="VEuPathDB" id="HostDB:ENSMUSG00000060279"/>
<dbReference type="eggNOG" id="KOG1077">
    <property type="taxonomic scope" value="Eukaryota"/>
</dbReference>
<dbReference type="GeneTree" id="ENSGT00950000182838"/>
<dbReference type="HOGENOM" id="CLU_003824_1_0_1"/>
<dbReference type="InParanoid" id="P17426"/>
<dbReference type="OMA" id="PVLMHRY"/>
<dbReference type="OrthoDB" id="413467at2759"/>
<dbReference type="PhylomeDB" id="P17426"/>
<dbReference type="TreeFam" id="TF300308"/>
<dbReference type="Reactome" id="R-MMU-177504">
    <property type="pathway name" value="Retrograde neurotrophin signalling"/>
</dbReference>
<dbReference type="Reactome" id="R-MMU-2132295">
    <property type="pathway name" value="MHC class II antigen presentation"/>
</dbReference>
<dbReference type="Reactome" id="R-MMU-416993">
    <property type="pathway name" value="Trafficking of GluR2-containing AMPA receptors"/>
</dbReference>
<dbReference type="Reactome" id="R-MMU-437239">
    <property type="pathway name" value="Recycling pathway of L1"/>
</dbReference>
<dbReference type="Reactome" id="R-MMU-5099900">
    <property type="pathway name" value="WNT5A-dependent internalization of FZD4"/>
</dbReference>
<dbReference type="Reactome" id="R-MMU-5140745">
    <property type="pathway name" value="WNT5A-dependent internalization of FZD2, FZD5 and ROR2"/>
</dbReference>
<dbReference type="Reactome" id="R-MMU-8856825">
    <property type="pathway name" value="Cargo recognition for clathrin-mediated endocytosis"/>
</dbReference>
<dbReference type="Reactome" id="R-MMU-8856828">
    <property type="pathway name" value="Clathrin-mediated endocytosis"/>
</dbReference>
<dbReference type="Reactome" id="R-MMU-8866427">
    <property type="pathway name" value="VLDLR internalisation and degradation"/>
</dbReference>
<dbReference type="Reactome" id="R-MMU-8964038">
    <property type="pathway name" value="LDL clearance"/>
</dbReference>
<dbReference type="BioGRID-ORCS" id="11771">
    <property type="hits" value="2 hits in 83 CRISPR screens"/>
</dbReference>
<dbReference type="CD-CODE" id="CE726F99">
    <property type="entry name" value="Postsynaptic density"/>
</dbReference>
<dbReference type="ChiTaRS" id="Ap2a1">
    <property type="organism name" value="mouse"/>
</dbReference>
<dbReference type="PRO" id="PR:P17426"/>
<dbReference type="Proteomes" id="UP000000589">
    <property type="component" value="Chromosome 7"/>
</dbReference>
<dbReference type="RNAct" id="P17426">
    <property type="molecule type" value="protein"/>
</dbReference>
<dbReference type="Bgee" id="ENSMUSG00000060279">
    <property type="expression patterns" value="Expressed in superior frontal gyrus and 220 other cell types or tissues"/>
</dbReference>
<dbReference type="ExpressionAtlas" id="P17426">
    <property type="expression patterns" value="baseline and differential"/>
</dbReference>
<dbReference type="GO" id="GO:0030122">
    <property type="term" value="C:AP-2 adaptor complex"/>
    <property type="evidence" value="ECO:0000314"/>
    <property type="project" value="UniProtKB"/>
</dbReference>
<dbReference type="GO" id="GO:0016324">
    <property type="term" value="C:apical plasma membrane"/>
    <property type="evidence" value="ECO:0007669"/>
    <property type="project" value="Ensembl"/>
</dbReference>
<dbReference type="GO" id="GO:0016323">
    <property type="term" value="C:basolateral plasma membrane"/>
    <property type="evidence" value="ECO:0007669"/>
    <property type="project" value="Ensembl"/>
</dbReference>
<dbReference type="GO" id="GO:0009898">
    <property type="term" value="C:cytoplasmic side of plasma membrane"/>
    <property type="evidence" value="ECO:0000303"/>
    <property type="project" value="ComplexPortal"/>
</dbReference>
<dbReference type="GO" id="GO:0032433">
    <property type="term" value="C:filopodium tip"/>
    <property type="evidence" value="ECO:0000314"/>
    <property type="project" value="MGI"/>
</dbReference>
<dbReference type="GO" id="GO:0098978">
    <property type="term" value="C:glutamatergic synapse"/>
    <property type="evidence" value="ECO:0000314"/>
    <property type="project" value="SynGO"/>
</dbReference>
<dbReference type="GO" id="GO:0030117">
    <property type="term" value="C:membrane coat"/>
    <property type="evidence" value="ECO:0000314"/>
    <property type="project" value="MGI"/>
</dbReference>
<dbReference type="GO" id="GO:0098843">
    <property type="term" value="C:postsynaptic endocytic zone"/>
    <property type="evidence" value="ECO:0000314"/>
    <property type="project" value="SynGO"/>
</dbReference>
<dbReference type="GO" id="GO:0030141">
    <property type="term" value="C:secretory granule"/>
    <property type="evidence" value="ECO:0000304"/>
    <property type="project" value="MGI"/>
</dbReference>
<dbReference type="GO" id="GO:0008021">
    <property type="term" value="C:synaptic vesicle"/>
    <property type="evidence" value="ECO:0007669"/>
    <property type="project" value="Ensembl"/>
</dbReference>
<dbReference type="GO" id="GO:0035615">
    <property type="term" value="F:clathrin adaptor activity"/>
    <property type="evidence" value="ECO:0007669"/>
    <property type="project" value="InterPro"/>
</dbReference>
<dbReference type="GO" id="GO:0050750">
    <property type="term" value="F:low-density lipoprotein particle receptor binding"/>
    <property type="evidence" value="ECO:0007669"/>
    <property type="project" value="Ensembl"/>
</dbReference>
<dbReference type="GO" id="GO:0019901">
    <property type="term" value="F:protein kinase binding"/>
    <property type="evidence" value="ECO:0000353"/>
    <property type="project" value="ParkinsonsUK-UCL"/>
</dbReference>
<dbReference type="GO" id="GO:0044877">
    <property type="term" value="F:protein-containing complex binding"/>
    <property type="evidence" value="ECO:0007669"/>
    <property type="project" value="Ensembl"/>
</dbReference>
<dbReference type="GO" id="GO:0072583">
    <property type="term" value="P:clathrin-dependent endocytosis"/>
    <property type="evidence" value="ECO:0000314"/>
    <property type="project" value="UniProtKB"/>
</dbReference>
<dbReference type="GO" id="GO:0006886">
    <property type="term" value="P:intracellular protein transport"/>
    <property type="evidence" value="ECO:0000304"/>
    <property type="project" value="MGI"/>
</dbReference>
<dbReference type="GO" id="GO:1900126">
    <property type="term" value="P:negative regulation of hyaluronan biosynthetic process"/>
    <property type="evidence" value="ECO:0000250"/>
    <property type="project" value="UniProtKB"/>
</dbReference>
<dbReference type="GO" id="GO:0010976">
    <property type="term" value="P:positive regulation of neuron projection development"/>
    <property type="evidence" value="ECO:0007669"/>
    <property type="project" value="Ensembl"/>
</dbReference>
<dbReference type="GO" id="GO:0048260">
    <property type="term" value="P:positive regulation of receptor-mediated endocytosis"/>
    <property type="evidence" value="ECO:0007669"/>
    <property type="project" value="Ensembl"/>
</dbReference>
<dbReference type="GO" id="GO:0098884">
    <property type="term" value="P:postsynaptic neurotransmitter receptor internalization"/>
    <property type="evidence" value="ECO:0000303"/>
    <property type="project" value="ComplexPortal"/>
</dbReference>
<dbReference type="GO" id="GO:0048488">
    <property type="term" value="P:synaptic vesicle endocytosis"/>
    <property type="evidence" value="ECO:0000314"/>
    <property type="project" value="SynGO"/>
</dbReference>
<dbReference type="GO" id="GO:0016192">
    <property type="term" value="P:vesicle-mediated transport"/>
    <property type="evidence" value="ECO:0000304"/>
    <property type="project" value="MGI"/>
</dbReference>
<dbReference type="FunFam" id="1.25.10.10:FF:000020">
    <property type="entry name" value="AP-2 complex subunit alpha"/>
    <property type="match status" value="1"/>
</dbReference>
<dbReference type="FunFam" id="2.60.40.1230:FF:000003">
    <property type="entry name" value="AP-2 complex subunit alpha"/>
    <property type="match status" value="1"/>
</dbReference>
<dbReference type="FunFam" id="3.30.310.10:FF:000004">
    <property type="entry name" value="AP-2 complex subunit alpha"/>
    <property type="match status" value="1"/>
</dbReference>
<dbReference type="Gene3D" id="2.60.40.1230">
    <property type="match status" value="1"/>
</dbReference>
<dbReference type="Gene3D" id="1.25.10.10">
    <property type="entry name" value="Leucine-rich Repeat Variant"/>
    <property type="match status" value="1"/>
</dbReference>
<dbReference type="Gene3D" id="3.30.310.10">
    <property type="entry name" value="TATA-Binding Protein"/>
    <property type="match status" value="1"/>
</dbReference>
<dbReference type="InterPro" id="IPR050840">
    <property type="entry name" value="Adaptor_Complx_Large_Subunit"/>
</dbReference>
<dbReference type="InterPro" id="IPR017104">
    <property type="entry name" value="AP2_complex_asu"/>
</dbReference>
<dbReference type="InterPro" id="IPR011989">
    <property type="entry name" value="ARM-like"/>
</dbReference>
<dbReference type="InterPro" id="IPR016024">
    <property type="entry name" value="ARM-type_fold"/>
</dbReference>
<dbReference type="InterPro" id="IPR002553">
    <property type="entry name" value="Clathrin/coatomer_adapt-like_N"/>
</dbReference>
<dbReference type="InterPro" id="IPR003164">
    <property type="entry name" value="Clathrin_a-adaptin_app_sub_C"/>
</dbReference>
<dbReference type="InterPro" id="IPR008152">
    <property type="entry name" value="Clathrin_a/b/g-adaptin_app_Ig"/>
</dbReference>
<dbReference type="InterPro" id="IPR013041">
    <property type="entry name" value="Clathrin_app_Ig-like_sf"/>
</dbReference>
<dbReference type="InterPro" id="IPR009028">
    <property type="entry name" value="Coatomer/calthrin_app_sub_C"/>
</dbReference>
<dbReference type="InterPro" id="IPR012295">
    <property type="entry name" value="TBP_dom_sf"/>
</dbReference>
<dbReference type="PANTHER" id="PTHR22780">
    <property type="entry name" value="ADAPTIN, ALPHA/GAMMA/EPSILON"/>
    <property type="match status" value="1"/>
</dbReference>
<dbReference type="Pfam" id="PF01602">
    <property type="entry name" value="Adaptin_N"/>
    <property type="match status" value="1"/>
</dbReference>
<dbReference type="Pfam" id="PF02296">
    <property type="entry name" value="Alpha_adaptin_C"/>
    <property type="match status" value="1"/>
</dbReference>
<dbReference type="Pfam" id="PF02883">
    <property type="entry name" value="Alpha_adaptinC2"/>
    <property type="match status" value="1"/>
</dbReference>
<dbReference type="PIRSF" id="PIRSF037091">
    <property type="entry name" value="AP2_complex_alpha"/>
    <property type="match status" value="1"/>
</dbReference>
<dbReference type="SMART" id="SM00809">
    <property type="entry name" value="Alpha_adaptinC2"/>
    <property type="match status" value="1"/>
</dbReference>
<dbReference type="SUPFAM" id="SSF48371">
    <property type="entry name" value="ARM repeat"/>
    <property type="match status" value="1"/>
</dbReference>
<dbReference type="SUPFAM" id="SSF49348">
    <property type="entry name" value="Clathrin adaptor appendage domain"/>
    <property type="match status" value="1"/>
</dbReference>
<dbReference type="SUPFAM" id="SSF55711">
    <property type="entry name" value="Subdomain of clathrin and coatomer appendage domain"/>
    <property type="match status" value="1"/>
</dbReference>
<sequence length="977" mass="107664">MPAVSKGDGMRGLAVFISDIRNCKSKEAEIKRINKELANIRSKFKGDKALDGYSKKKYVCKLLFIFLLGHDIDFGHMEAVNLLSSNKYTEKQIGYLFISVLVNSNSELIRLINNAIKNDLASRNPTFMCLALHCIANVGSREMGEAFAADIPRILVAGDSMDSVKQSAALCLLRLYKASPDLVPMGEWTARVVHLLNDQHMGVVTAAVSLITCLCKKNPDDFKTCISLAVSRLSRIVSSASTDLQDYTYYFVPAPWLSVKLLRLLQCYPPPEDAAVKGRLVECLETVLNKAQEPPKSKKVQHSNAKNAILFETISLIIHYDSEPNLLVRACNQLGQFLQHRETNLRYLALESMCTLASSEFSHEAVKTHIDTVINALKTERDVSVRQRAADLLYAMCDRSNAKQIVSEMLRYLETADYAIREEIVLKVAILAEKYAVDYSWYVDTILNLIRIAGDYVSEEVWYRVLQIVTNRDDVQGYAAKTVFEALQAPACHENMVKVGGYILGEFGNLIAGDPRSSPPVQFSLLHSKFHLCSVATRALLLSTYIKFINLFPETKATIQGVLRAGSQLRNADVELQQRAVEYLTLSSVASTDVLATVLEEMPPFPERESSILAKLKRKKGPGAASALDDSRRDTSSNDINGGVEPTPSTVSTPSPSADLLGLRAAPPPAAPPAPVGGNLLVDVFSDGPTAQPSLGPTPEEAFLSELEPPAPESPMALLADPAPAADPGPEDIGPPIPEADELLNKFVCKNSGVLFENQLLQIGVKSEFRQNLGRMYLFYGNKTSVQFQNFLPTVVHPGDLQTQLAVQTKRVAAQVDGGAQVQQVLNIECLRDFLTPPLLSVRFRYGGTAQSLTLKLPVTINKFFQPTEMAAQDFFQRWKQLSLPLQEAQKIFKANHPMDAEVTKAKLLGFGSALLDNVDPNPENFVGAGIIQTKALQVGCLLRLEPNAQAQMYRLTLRTSKEPVSRHLCELLAQQF</sequence>
<organism>
    <name type="scientific">Mus musculus</name>
    <name type="common">Mouse</name>
    <dbReference type="NCBI Taxonomy" id="10090"/>
    <lineage>
        <taxon>Eukaryota</taxon>
        <taxon>Metazoa</taxon>
        <taxon>Chordata</taxon>
        <taxon>Craniata</taxon>
        <taxon>Vertebrata</taxon>
        <taxon>Euteleostomi</taxon>
        <taxon>Mammalia</taxon>
        <taxon>Eutheria</taxon>
        <taxon>Euarchontoglires</taxon>
        <taxon>Glires</taxon>
        <taxon>Rodentia</taxon>
        <taxon>Myomorpha</taxon>
        <taxon>Muroidea</taxon>
        <taxon>Muridae</taxon>
        <taxon>Murinae</taxon>
        <taxon>Mus</taxon>
        <taxon>Mus</taxon>
    </lineage>
</organism>
<proteinExistence type="evidence at protein level"/>
<evidence type="ECO:0000250" key="1"/>
<evidence type="ECO:0000250" key="2">
    <source>
        <dbReference type="UniProtKB" id="O95782"/>
    </source>
</evidence>
<evidence type="ECO:0000250" key="3">
    <source>
        <dbReference type="UniProtKB" id="Q96CW1"/>
    </source>
</evidence>
<evidence type="ECO:0000256" key="4">
    <source>
        <dbReference type="SAM" id="MobiDB-lite"/>
    </source>
</evidence>
<evidence type="ECO:0000269" key="5">
    <source>
    </source>
</evidence>
<evidence type="ECO:0000269" key="6">
    <source>
    </source>
</evidence>
<evidence type="ECO:0000269" key="7">
    <source>
    </source>
</evidence>
<evidence type="ECO:0000269" key="8">
    <source>
    </source>
</evidence>
<evidence type="ECO:0000269" key="9">
    <source>
    </source>
</evidence>
<evidence type="ECO:0000269" key="10">
    <source>
    </source>
</evidence>
<evidence type="ECO:0000269" key="11">
    <source>
    </source>
</evidence>
<evidence type="ECO:0000305" key="12"/>
<evidence type="ECO:0007744" key="13">
    <source>
    </source>
</evidence>
<protein>
    <recommendedName>
        <fullName>AP-2 complex subunit alpha-1</fullName>
    </recommendedName>
    <alternativeName>
        <fullName>100 kDa coated vesicle protein A</fullName>
    </alternativeName>
    <alternativeName>
        <fullName>Adaptor protein complex AP-2 subunit alpha-1</fullName>
    </alternativeName>
    <alternativeName>
        <fullName>Adaptor-related protein complex 2 subunit alpha-1</fullName>
    </alternativeName>
    <alternativeName>
        <fullName>Alpha-adaptin A</fullName>
    </alternativeName>
    <alternativeName>
        <fullName>Alpha1-adaptin</fullName>
    </alternativeName>
    <alternativeName>
        <fullName>Clathrin assembly protein complex 2 alpha-A large chain</fullName>
    </alternativeName>
    <alternativeName>
        <fullName>Plasma membrane adaptor HA2/AP2 adaptin alpha A subunit</fullName>
    </alternativeName>
</protein>
<keyword id="KW-0025">Alternative splicing</keyword>
<keyword id="KW-1003">Cell membrane</keyword>
<keyword id="KW-0168">Coated pit</keyword>
<keyword id="KW-0254">Endocytosis</keyword>
<keyword id="KW-0472">Membrane</keyword>
<keyword id="KW-0597">Phosphoprotein</keyword>
<keyword id="KW-0653">Protein transport</keyword>
<keyword id="KW-1185">Reference proteome</keyword>
<keyword id="KW-0813">Transport</keyword>